<gene>
    <name evidence="1" type="primary">rpoC</name>
    <name type="ordered locus">RMA_0190</name>
</gene>
<accession>A8F0P8</accession>
<protein>
    <recommendedName>
        <fullName evidence="1">DNA-directed RNA polymerase subunit beta'</fullName>
        <shortName evidence="1">RNAP subunit beta'</shortName>
        <ecNumber evidence="1">2.7.7.6</ecNumber>
    </recommendedName>
    <alternativeName>
        <fullName evidence="1">RNA polymerase subunit beta'</fullName>
    </alternativeName>
    <alternativeName>
        <fullName evidence="1">Transcriptase subunit beta'</fullName>
    </alternativeName>
</protein>
<evidence type="ECO:0000255" key="1">
    <source>
        <dbReference type="HAMAP-Rule" id="MF_01322"/>
    </source>
</evidence>
<reference key="1">
    <citation type="journal article" date="2007" name="Genome Res.">
        <title>Lateral gene transfer between obligate intracellular bacteria: evidence from the Rickettsia massiliae genome.</title>
        <authorList>
            <person name="Blanc G."/>
            <person name="Ogata H."/>
            <person name="Robert C."/>
            <person name="Audic S."/>
            <person name="Claverie J.-M."/>
            <person name="Raoult D."/>
        </authorList>
    </citation>
    <scope>NUCLEOTIDE SEQUENCE [LARGE SCALE GENOMIC DNA]</scope>
    <source>
        <strain>Mtu5</strain>
    </source>
</reference>
<proteinExistence type="inferred from homology"/>
<comment type="function">
    <text evidence="1">DNA-dependent RNA polymerase catalyzes the transcription of DNA into RNA using the four ribonucleoside triphosphates as substrates.</text>
</comment>
<comment type="catalytic activity">
    <reaction evidence="1">
        <text>RNA(n) + a ribonucleoside 5'-triphosphate = RNA(n+1) + diphosphate</text>
        <dbReference type="Rhea" id="RHEA:21248"/>
        <dbReference type="Rhea" id="RHEA-COMP:14527"/>
        <dbReference type="Rhea" id="RHEA-COMP:17342"/>
        <dbReference type="ChEBI" id="CHEBI:33019"/>
        <dbReference type="ChEBI" id="CHEBI:61557"/>
        <dbReference type="ChEBI" id="CHEBI:140395"/>
        <dbReference type="EC" id="2.7.7.6"/>
    </reaction>
</comment>
<comment type="cofactor">
    <cofactor evidence="1">
        <name>Mg(2+)</name>
        <dbReference type="ChEBI" id="CHEBI:18420"/>
    </cofactor>
    <text evidence="1">Binds 1 Mg(2+) ion per subunit.</text>
</comment>
<comment type="cofactor">
    <cofactor evidence="1">
        <name>Zn(2+)</name>
        <dbReference type="ChEBI" id="CHEBI:29105"/>
    </cofactor>
    <text evidence="1">Binds 2 Zn(2+) ions per subunit.</text>
</comment>
<comment type="subunit">
    <text evidence="1">The RNAP catalytic core consists of 2 alpha, 1 beta, 1 beta' and 1 omega subunit. When a sigma factor is associated with the core the holoenzyme is formed, which can initiate transcription.</text>
</comment>
<comment type="similarity">
    <text evidence="1">Belongs to the RNA polymerase beta' chain family.</text>
</comment>
<name>RPOC_RICM5</name>
<sequence length="1374" mass="153461">MFMSVVNFCGQLSNTQQFDQIRINIASPDQVRSWSFGEVTKPETINYRTFKPEKDGLFCARIFGPVKDYECLCGKYKRMKNRGITCEKCGVEVTVSRVRRERMGHIELAAPVAHIWFLKSLPSRISTLLDMTMRDIEKILYFENYVVVDPGLSILQKGELLTEEELQKAKDKYGEDAFTASIGAEVIQQMLKELDFSKLKQELYEELQTTSSEVKKKKLVKRLKLVEDFLESENKPEWMIMDVLPVIPPEIRPLVMLDGGRFATSDLNELYRRVINRNNRLKKLIESKAPDIIVRNEKRMLQEAVDALFDNGRRGRAAKNANKRPFKSLSDMLKGKQGRFRQNLLGKRVDYSGRSVIVVGPELKLHQCGLPKKMALELFKPFIYSKLELYGIATTIKAAKKMVEAEKSEVWDVLEEVIREHPVLLNRAPTLHRLGIQAFEPLLIEGKAIQLHPLVCTAFNADFDGDQMAVHIPLSIEAQLEARVFMMSTNNILSPANGRPIIVPDKDIVLGLYYLTLAFDNEVGAGMMFSDLAEMEHALYNKFITIHTKIKYRRNQLNAEGKMVPVIIDTTYGRLMVGELLPSNPNIEFKFINKQLTKKDISLVIDLVYRHCGQKATVIFADQLMKLGFKYACSSGISFGMDDMVVPESKSTHINETQLEIQEFEQQYSNGLITYGEKYNKVVDAWSRCTDRVANDMMKEIATPPVNDDPNHQRINAIYMMAISGARGSFQQIKQLGGMRGLMTKSNGQIIQTPIISNFKEGLTEFECFNSANGMRKGQIDTALKTASSGYLTRKLVDVAQDCIITEKDCGTDKGIEVKSVIEGGEVIVPLAEKILGRTAAIDIFHPVTNDLILNKGELISEAKLEQIESAGLDRIMIKSVLTCESTTGICSICYGRDLATGTLVSEGEAIGVIAAQSIGEPGTQLTMRTFHIGGAATKGAEVSSVDASYDAKVKIISRNVVINSEERKIVMSRNCELLLLDNNGNEKARHKIPYGARLLVDDGDMVIKTQKLAEWDPYTIPIITEKSGKVLFKDMVEGITIRDVTDEATGIPSKVIIESKQYSRGAELRPRIQLLGAKGEVITLSNGLEARYYLPVGAVLSVEDGVQISVGDIIARIPKESTTTKDITGGLPRVAELVEARRPKDHAVIAEIDGRVEFGKDYKSKRRIIIHPIDETMSIEYMVPKGKHVVVNEGDFVKKGDLLIDGNPVLQDILKVMGVEVLANYIVKEVQAVYRLQGVKIDDKHIEVIIRQMLQKVEVTDSGGTTLLAGEKIDRHEFDEINAKAMKNGLKPAEAQLILQGITKASLQTRSFISAASFQETTRVLTEAAIAGKVDKLRGLKENVIVGRLVPAGTGYFMDKMRKAAIKLDEENV</sequence>
<keyword id="KW-0240">DNA-directed RNA polymerase</keyword>
<keyword id="KW-0460">Magnesium</keyword>
<keyword id="KW-0479">Metal-binding</keyword>
<keyword id="KW-0548">Nucleotidyltransferase</keyword>
<keyword id="KW-0804">Transcription</keyword>
<keyword id="KW-0808">Transferase</keyword>
<keyword id="KW-0862">Zinc</keyword>
<feature type="chain" id="PRO_0000353422" description="DNA-directed RNA polymerase subunit beta'">
    <location>
        <begin position="1"/>
        <end position="1374"/>
    </location>
</feature>
<feature type="binding site" evidence="1">
    <location>
        <position position="71"/>
    </location>
    <ligand>
        <name>Zn(2+)</name>
        <dbReference type="ChEBI" id="CHEBI:29105"/>
        <label>1</label>
    </ligand>
</feature>
<feature type="binding site" evidence="1">
    <location>
        <position position="73"/>
    </location>
    <ligand>
        <name>Zn(2+)</name>
        <dbReference type="ChEBI" id="CHEBI:29105"/>
        <label>1</label>
    </ligand>
</feature>
<feature type="binding site" evidence="1">
    <location>
        <position position="86"/>
    </location>
    <ligand>
        <name>Zn(2+)</name>
        <dbReference type="ChEBI" id="CHEBI:29105"/>
        <label>1</label>
    </ligand>
</feature>
<feature type="binding site" evidence="1">
    <location>
        <position position="89"/>
    </location>
    <ligand>
        <name>Zn(2+)</name>
        <dbReference type="ChEBI" id="CHEBI:29105"/>
        <label>1</label>
    </ligand>
</feature>
<feature type="binding site" evidence="1">
    <location>
        <position position="462"/>
    </location>
    <ligand>
        <name>Mg(2+)</name>
        <dbReference type="ChEBI" id="CHEBI:18420"/>
    </ligand>
</feature>
<feature type="binding site" evidence="1">
    <location>
        <position position="464"/>
    </location>
    <ligand>
        <name>Mg(2+)</name>
        <dbReference type="ChEBI" id="CHEBI:18420"/>
    </ligand>
</feature>
<feature type="binding site" evidence="1">
    <location>
        <position position="466"/>
    </location>
    <ligand>
        <name>Mg(2+)</name>
        <dbReference type="ChEBI" id="CHEBI:18420"/>
    </ligand>
</feature>
<feature type="binding site" evidence="1">
    <location>
        <position position="810"/>
    </location>
    <ligand>
        <name>Zn(2+)</name>
        <dbReference type="ChEBI" id="CHEBI:29105"/>
        <label>2</label>
    </ligand>
</feature>
<feature type="binding site" evidence="1">
    <location>
        <position position="884"/>
    </location>
    <ligand>
        <name>Zn(2+)</name>
        <dbReference type="ChEBI" id="CHEBI:29105"/>
        <label>2</label>
    </ligand>
</feature>
<feature type="binding site" evidence="1">
    <location>
        <position position="891"/>
    </location>
    <ligand>
        <name>Zn(2+)</name>
        <dbReference type="ChEBI" id="CHEBI:29105"/>
        <label>2</label>
    </ligand>
</feature>
<feature type="binding site" evidence="1">
    <location>
        <position position="894"/>
    </location>
    <ligand>
        <name>Zn(2+)</name>
        <dbReference type="ChEBI" id="CHEBI:29105"/>
        <label>2</label>
    </ligand>
</feature>
<dbReference type="EC" id="2.7.7.6" evidence="1"/>
<dbReference type="EMBL" id="CP000683">
    <property type="protein sequence ID" value="ABV84484.1"/>
    <property type="molecule type" value="Genomic_DNA"/>
</dbReference>
<dbReference type="SMR" id="A8F0P8"/>
<dbReference type="KEGG" id="rms:RMA_0190"/>
<dbReference type="HOGENOM" id="CLU_000524_3_1_5"/>
<dbReference type="Proteomes" id="UP000001311">
    <property type="component" value="Chromosome"/>
</dbReference>
<dbReference type="GO" id="GO:0000428">
    <property type="term" value="C:DNA-directed RNA polymerase complex"/>
    <property type="evidence" value="ECO:0007669"/>
    <property type="project" value="UniProtKB-KW"/>
</dbReference>
<dbReference type="GO" id="GO:0003677">
    <property type="term" value="F:DNA binding"/>
    <property type="evidence" value="ECO:0007669"/>
    <property type="project" value="UniProtKB-UniRule"/>
</dbReference>
<dbReference type="GO" id="GO:0003899">
    <property type="term" value="F:DNA-directed RNA polymerase activity"/>
    <property type="evidence" value="ECO:0007669"/>
    <property type="project" value="UniProtKB-UniRule"/>
</dbReference>
<dbReference type="GO" id="GO:0000287">
    <property type="term" value="F:magnesium ion binding"/>
    <property type="evidence" value="ECO:0007669"/>
    <property type="project" value="UniProtKB-UniRule"/>
</dbReference>
<dbReference type="GO" id="GO:0008270">
    <property type="term" value="F:zinc ion binding"/>
    <property type="evidence" value="ECO:0007669"/>
    <property type="project" value="UniProtKB-UniRule"/>
</dbReference>
<dbReference type="GO" id="GO:0006351">
    <property type="term" value="P:DNA-templated transcription"/>
    <property type="evidence" value="ECO:0007669"/>
    <property type="project" value="UniProtKB-UniRule"/>
</dbReference>
<dbReference type="CDD" id="cd02655">
    <property type="entry name" value="RNAP_beta'_C"/>
    <property type="match status" value="1"/>
</dbReference>
<dbReference type="CDD" id="cd01609">
    <property type="entry name" value="RNAP_beta'_N"/>
    <property type="match status" value="1"/>
</dbReference>
<dbReference type="FunFam" id="1.10.150.390:FF:000002">
    <property type="entry name" value="DNA-directed RNA polymerase subunit beta"/>
    <property type="match status" value="1"/>
</dbReference>
<dbReference type="Gene3D" id="1.10.132.30">
    <property type="match status" value="1"/>
</dbReference>
<dbReference type="Gene3D" id="1.10.150.390">
    <property type="match status" value="1"/>
</dbReference>
<dbReference type="Gene3D" id="1.10.1790.20">
    <property type="match status" value="1"/>
</dbReference>
<dbReference type="Gene3D" id="1.10.40.90">
    <property type="match status" value="1"/>
</dbReference>
<dbReference type="Gene3D" id="2.40.40.20">
    <property type="match status" value="1"/>
</dbReference>
<dbReference type="Gene3D" id="2.40.50.100">
    <property type="match status" value="3"/>
</dbReference>
<dbReference type="Gene3D" id="4.10.860.120">
    <property type="entry name" value="RNA polymerase II, clamp domain"/>
    <property type="match status" value="1"/>
</dbReference>
<dbReference type="Gene3D" id="1.10.274.100">
    <property type="entry name" value="RNA polymerase Rpb1, domain 3"/>
    <property type="match status" value="2"/>
</dbReference>
<dbReference type="HAMAP" id="MF_01322">
    <property type="entry name" value="RNApol_bact_RpoC"/>
    <property type="match status" value="1"/>
</dbReference>
<dbReference type="InterPro" id="IPR045867">
    <property type="entry name" value="DNA-dir_RpoC_beta_prime"/>
</dbReference>
<dbReference type="InterPro" id="IPR012754">
    <property type="entry name" value="DNA-dir_RpoC_beta_prime_bact"/>
</dbReference>
<dbReference type="InterPro" id="IPR000722">
    <property type="entry name" value="RNA_pol_asu"/>
</dbReference>
<dbReference type="InterPro" id="IPR006592">
    <property type="entry name" value="RNA_pol_N"/>
</dbReference>
<dbReference type="InterPro" id="IPR007080">
    <property type="entry name" value="RNA_pol_Rpb1_1"/>
</dbReference>
<dbReference type="InterPro" id="IPR007066">
    <property type="entry name" value="RNA_pol_Rpb1_3"/>
</dbReference>
<dbReference type="InterPro" id="IPR042102">
    <property type="entry name" value="RNA_pol_Rpb1_3_sf"/>
</dbReference>
<dbReference type="InterPro" id="IPR007083">
    <property type="entry name" value="RNA_pol_Rpb1_4"/>
</dbReference>
<dbReference type="InterPro" id="IPR007081">
    <property type="entry name" value="RNA_pol_Rpb1_5"/>
</dbReference>
<dbReference type="InterPro" id="IPR044893">
    <property type="entry name" value="RNA_pol_Rpb1_clamp_domain"/>
</dbReference>
<dbReference type="InterPro" id="IPR038120">
    <property type="entry name" value="Rpb1_funnel_sf"/>
</dbReference>
<dbReference type="NCBIfam" id="TIGR02386">
    <property type="entry name" value="rpoC_TIGR"/>
    <property type="match status" value="1"/>
</dbReference>
<dbReference type="PANTHER" id="PTHR19376">
    <property type="entry name" value="DNA-DIRECTED RNA POLYMERASE"/>
    <property type="match status" value="1"/>
</dbReference>
<dbReference type="PANTHER" id="PTHR19376:SF54">
    <property type="entry name" value="DNA-DIRECTED RNA POLYMERASE SUBUNIT BETA"/>
    <property type="match status" value="1"/>
</dbReference>
<dbReference type="Pfam" id="PF04997">
    <property type="entry name" value="RNA_pol_Rpb1_1"/>
    <property type="match status" value="1"/>
</dbReference>
<dbReference type="Pfam" id="PF00623">
    <property type="entry name" value="RNA_pol_Rpb1_2"/>
    <property type="match status" value="2"/>
</dbReference>
<dbReference type="Pfam" id="PF04983">
    <property type="entry name" value="RNA_pol_Rpb1_3"/>
    <property type="match status" value="1"/>
</dbReference>
<dbReference type="Pfam" id="PF05000">
    <property type="entry name" value="RNA_pol_Rpb1_4"/>
    <property type="match status" value="1"/>
</dbReference>
<dbReference type="Pfam" id="PF04998">
    <property type="entry name" value="RNA_pol_Rpb1_5"/>
    <property type="match status" value="1"/>
</dbReference>
<dbReference type="SMART" id="SM00663">
    <property type="entry name" value="RPOLA_N"/>
    <property type="match status" value="1"/>
</dbReference>
<dbReference type="SUPFAM" id="SSF64484">
    <property type="entry name" value="beta and beta-prime subunits of DNA dependent RNA-polymerase"/>
    <property type="match status" value="1"/>
</dbReference>
<organism>
    <name type="scientific">Rickettsia massiliae (strain Mtu5)</name>
    <dbReference type="NCBI Taxonomy" id="416276"/>
    <lineage>
        <taxon>Bacteria</taxon>
        <taxon>Pseudomonadati</taxon>
        <taxon>Pseudomonadota</taxon>
        <taxon>Alphaproteobacteria</taxon>
        <taxon>Rickettsiales</taxon>
        <taxon>Rickettsiaceae</taxon>
        <taxon>Rickettsieae</taxon>
        <taxon>Rickettsia</taxon>
        <taxon>spotted fever group</taxon>
    </lineage>
</organism>